<keyword id="KW-0024">Alternative initiation</keyword>
<keyword id="KW-0025">Alternative splicing</keyword>
<keyword id="KW-0167">Capsid protein</keyword>
<keyword id="KW-1015">Disulfide bond</keyword>
<keyword id="KW-1048">Host nucleus</keyword>
<keyword id="KW-0945">Host-virus interaction</keyword>
<keyword id="KW-0426">Late protein</keyword>
<keyword id="KW-0597">Phosphoprotein</keyword>
<keyword id="KW-1145">T=7 icosahedral capsid protein</keyword>
<keyword id="KW-1161">Viral attachment to host cell</keyword>
<keyword id="KW-1162">Viral penetration into host cytoplasm</keyword>
<keyword id="KW-0946">Virion</keyword>
<keyword id="KW-1164">Virus endocytosis by host</keyword>
<keyword id="KW-1160">Virus entry into host cell</keyword>
<organism>
    <name type="scientific">Simian virus 12 (strain wt100)</name>
    <name type="common">SV-12</name>
    <name type="synonym">Baboon polyomavirus 1</name>
    <dbReference type="NCBI Taxonomy" id="557605"/>
    <lineage>
        <taxon>Viruses</taxon>
        <taxon>Monodnaviria</taxon>
        <taxon>Shotokuvirae</taxon>
        <taxon>Cossaviricota</taxon>
        <taxon>Papovaviricetes</taxon>
        <taxon>Sepolyvirales</taxon>
        <taxon>Polyomaviridae</taxon>
        <taxon>Simian virus 12</taxon>
    </lineage>
</organism>
<reference key="1">
    <citation type="journal article" date="2005" name="J. Virol.">
        <title>Complete nucleotide sequence of polyomavirus SA12.</title>
        <authorList>
            <person name="Cantalupo P."/>
            <person name="Doering A."/>
            <person name="Sullivan C.S."/>
            <person name="Pal A."/>
            <person name="Peden K.W."/>
            <person name="Lewis A.M."/>
            <person name="Pipas J.M."/>
        </authorList>
    </citation>
    <scope>NUCLEOTIDE SEQUENCE [GENOMIC DNA]</scope>
    <source>
        <strain>SA12</strain>
    </source>
</reference>
<reference key="2">
    <citation type="journal article" date="2006" name="J. Virol.">
        <title>Comparing phylogenetic codivergence between polyomaviruses and their hosts.</title>
        <authorList>
            <person name="Perez-Losada M."/>
            <person name="Christensen R.G."/>
            <person name="McClellan D.A."/>
            <person name="Adams B.J."/>
            <person name="Viscidi R.P."/>
            <person name="Demma J.C."/>
            <person name="Crandall K.A."/>
        </authorList>
    </citation>
    <scope>NUCLEOTIDE SEQUENCE [GENOMIC DNA]</scope>
    <source>
        <strain>SA12</strain>
    </source>
</reference>
<reference key="3">
    <citation type="journal article" date="2009" name="Virology">
        <title>The Polyomaviridae: Contributions of virus structure to our understanding of virus receptors and infectious entry.</title>
        <authorList>
            <person name="Neu U."/>
            <person name="Stehle T."/>
            <person name="Atwood W.J."/>
        </authorList>
    </citation>
    <scope>REVIEW</scope>
</reference>
<comment type="function">
    <text evidence="2 4">Forms an icosahedral capsid with a T=7 symmetry and a 40 nm diameter. The capsid is composed of 72 pentamers linked to each other by disulfide bonds and associated with VP2 or VP3 proteins. Interacts with sialic acids on the cell surface to provide virion attachment to target cell. Once attached, the virion is internalized by endocytosis and traffics to the endoplasmic reticulum. Inside the endoplasmic reticulum, the protein folding machinery isomerizes VP1 interpentamer disulfide bonds, thereby triggering initial uncoating. Next, the virion uses the endoplasmic reticulum-associated degradation machinery to probably translocate in the cytosol before reaching the nucleus. Nuclear entry of the viral DNA involves the selective exposure and importin recognition of VP2/Vp3 nuclear localization signal. In late phase of infection, neo-synthesized VP1 encapsulates replicated genomic DNA in the nucleus, and participates in rearranging nucleosomes around the viral DNA.</text>
</comment>
<comment type="subunit">
    <text evidence="2">Homomultimer; disulfide-linked. The virus capsid is composed of 72 icosahedral units, each one composed of five disulfide-linked copies of VP1. Interacts with minor capsid proteins VP2 and VP3.</text>
</comment>
<comment type="subcellular location">
    <subcellularLocation>
        <location>Virion</location>
    </subcellularLocation>
    <subcellularLocation>
        <location evidence="2">Host nucleus</location>
    </subcellularLocation>
</comment>
<comment type="alternative products">
    <event type="alternative splicing"/>
    <event type="alternative initiation"/>
    <isoform>
        <id>Q1W5X1-1</id>
        <name>VP1</name>
        <name>Major capsid protein VP1</name>
        <sequence type="displayed"/>
    </isoform>
    <isoform>
        <id>Q3L6L8-1</id>
        <name>VP2</name>
        <name>Minor capsid protein VP2</name>
        <sequence type="external"/>
    </isoform>
    <isoform>
        <id>Q3L6L8-2</id>
        <name>VP3</name>
        <name>Minor capsid protein VP3</name>
        <sequence type="external"/>
    </isoform>
    <isoform>
        <id>Q3L6L8-3</id>
        <name>VP4</name>
        <name>Viroporin VP4</name>
        <sequence type="external"/>
    </isoform>
    <isoform>
        <id>Q3L6L9-1</id>
        <name>Agno</name>
        <sequence type="external"/>
    </isoform>
</comment>
<comment type="domain">
    <text evidence="2">A DNA-binding domain overlapping a bipartite nuclear localization signal is present in the N-terminal region of the protein and is required for efficient virus formation.</text>
</comment>
<comment type="miscellaneous">
    <molecule>Isoform VP1</molecule>
    <text>Produced by alternative splicing of the late mRNA.</text>
</comment>
<comment type="similarity">
    <text evidence="3">Belongs to the polyomaviruses coat protein VP1 family.</text>
</comment>
<protein>
    <recommendedName>
        <fullName>Major capsid protein VP1</fullName>
    </recommendedName>
    <alternativeName>
        <fullName>Major structural protein VP1</fullName>
    </alternativeName>
</protein>
<sequence length="362" mass="40183">MPPAKRKGECPGAAPKKPKDPVRVPKLLIRGGVEVLEVKTGVDSITEVECFLTPEMGDANEHLRGYSQRVTCDVTFENDAPQKKTLPCYSTARIPLPNLNEDLTCGNILMWEAVTVKTEVLGVTSMLNLHAEAQKVHDNGAGRPVQGSNFHFFSVGGEPLELQGVLHNYRTTYPEGTIAPKNPTAESQVMNTEHKAYLDKTGAYPVECWVPDPSRNENTRYFGTYTGGENVPPVLHVTNTATTVLLDEQGVGPLCKADSLYVSAVDICGLFTNSSGTQQWRGLSRYFKISLRKRSVKNPYPISFLLSDLINRRTTRVQGQPMYGMNAQVEEVRVYDGTEELPGDPDMMRYIDKYGQHQTKML</sequence>
<accession>Q1W5X1</accession>
<accession>Q3L6L6</accession>
<feature type="chain" id="PRO_0000356258" description="Major capsid protein VP1">
    <location>
        <begin position="1"/>
        <end position="362"/>
    </location>
</feature>
<feature type="short sequence motif" description="Bipartite nuclear localization signal" evidence="2">
    <location>
        <begin position="5"/>
        <end position="19"/>
    </location>
</feature>
<feature type="modified residue" description="Phosphothreonine; by host" evidence="1">
    <location>
        <position position="338"/>
    </location>
</feature>
<feature type="disulfide bond" description="Interchain (with C-10)" evidence="1">
    <location>
        <position position="10"/>
    </location>
</feature>
<feature type="disulfide bond" description="Interchain (with C-105)" evidence="1">
    <location>
        <position position="105"/>
    </location>
</feature>
<organismHost>
    <name type="scientific">Papio hamadryas ursinus</name>
    <name type="common">Chacma baboon</name>
    <dbReference type="NCBI Taxonomy" id="36229"/>
</organismHost>
<proteinExistence type="inferred from homology"/>
<evidence type="ECO:0000250" key="1"/>
<evidence type="ECO:0000250" key="2">
    <source>
        <dbReference type="UniProtKB" id="P03087"/>
    </source>
</evidence>
<evidence type="ECO:0000305" key="3"/>
<evidence type="ECO:0000305" key="4">
    <source>
    </source>
</evidence>
<name>VP1_POVS1</name>
<dbReference type="EMBL" id="DQ435829">
    <property type="protein sequence ID" value="ABD92876.1"/>
    <property type="molecule type" value="Genomic_DNA"/>
</dbReference>
<dbReference type="EMBL" id="AY614708">
    <property type="protein sequence ID" value="AAV75982.1"/>
    <property type="molecule type" value="Genomic_DNA"/>
</dbReference>
<dbReference type="RefSeq" id="YP_406554.1">
    <property type="nucleotide sequence ID" value="NC_007611.1"/>
</dbReference>
<dbReference type="SMR" id="Q1W5X1"/>
<dbReference type="GeneID" id="5123718"/>
<dbReference type="KEGG" id="vg:5123718"/>
<dbReference type="Proteomes" id="UP000130309">
    <property type="component" value="Segment"/>
</dbReference>
<dbReference type="Proteomes" id="UP000173202">
    <property type="component" value="Genome"/>
</dbReference>
<dbReference type="GO" id="GO:0042025">
    <property type="term" value="C:host cell nucleus"/>
    <property type="evidence" value="ECO:0007669"/>
    <property type="project" value="UniProtKB-SubCell"/>
</dbReference>
<dbReference type="GO" id="GO:0039620">
    <property type="term" value="C:T=7 icosahedral viral capsid"/>
    <property type="evidence" value="ECO:0007669"/>
    <property type="project" value="UniProtKB-KW"/>
</dbReference>
<dbReference type="GO" id="GO:0005198">
    <property type="term" value="F:structural molecule activity"/>
    <property type="evidence" value="ECO:0007669"/>
    <property type="project" value="InterPro"/>
</dbReference>
<dbReference type="GO" id="GO:0075509">
    <property type="term" value="P:endocytosis involved in viral entry into host cell"/>
    <property type="evidence" value="ECO:0007669"/>
    <property type="project" value="UniProtKB-KW"/>
</dbReference>
<dbReference type="GO" id="GO:0019062">
    <property type="term" value="P:virion attachment to host cell"/>
    <property type="evidence" value="ECO:0007669"/>
    <property type="project" value="UniProtKB-KW"/>
</dbReference>
<dbReference type="Gene3D" id="2.60.175.10">
    <property type="entry name" value="Capsid protein VP1,Polyomavirus"/>
    <property type="match status" value="1"/>
</dbReference>
<dbReference type="InterPro" id="IPR000662">
    <property type="entry name" value="Capsid_VP1_Polyomavir"/>
</dbReference>
<dbReference type="InterPro" id="IPR011222">
    <property type="entry name" value="dsDNA_vir_gr_I_capsid"/>
</dbReference>
<dbReference type="InterPro" id="IPR036931">
    <property type="entry name" value="Polyomavir_VP1_sf"/>
</dbReference>
<dbReference type="Pfam" id="PF00718">
    <property type="entry name" value="Polyoma_coat"/>
    <property type="match status" value="1"/>
</dbReference>
<dbReference type="PIRSF" id="PIRSF003376">
    <property type="entry name" value="Capsid_VP1_Polyomavir"/>
    <property type="match status" value="1"/>
</dbReference>
<dbReference type="SUPFAM" id="SSF88648">
    <property type="entry name" value="Group I dsDNA viruses"/>
    <property type="match status" value="1"/>
</dbReference>
<dbReference type="PROSITE" id="PS00178">
    <property type="entry name" value="AA_TRNA_LIGASE_I"/>
    <property type="match status" value="1"/>
</dbReference>